<sequence length="500" mass="57419">MEVSTNPSSNIDPGDYVEMNDSITHLPSKVVIQDITMELHCPLCNDWFRDPLMLSCGHNFCEACIQDFWRLQAKETFCPECKMLCQYNNCTFNPVLDKLVEKIKKLPLLKGHPQCPEHGENLKLFSKPDGKLICFQCKDARLSVGQSKEFLQISDAVHFFTEELAIQQGQLETTLKELQTLRNMQKEAIAAHKENKLHLQQHVSMEFLKLHQFLHSKEKDILTELREEGKALNEEMELNLSQLQEQCLLAKDMLVSIQAKTEQQNSFDFLKDITTLLHSLEQGMKVLATRELISRKLNLGQYKGPIQYMVWREMQDTLCPGLSPLTLDPKTAHPNLVLSKSQTSVWHGDIKKIMPDDPERFDSSVAVLGSRGFTSGKWYWEVEVAKKTKWTVGVVRESIIRKGSCPLTPEQGFWLLRLRNQTDLKALDLPSFSLTLTNNLDKVGIYLDYEGGQLSFYNAKTMTHIYTFSNTFMEKLYPYFCPCLNDGGENKEPLHILHPQ</sequence>
<name>TRI69_HUMAN</name>
<accession>Q86WT6</accession>
<accession>A8MX03</accession>
<accession>Q309B0</accession>
<accession>Q4G1A5</accession>
<accession>Q6W897</accession>
<accession>Q8IYY3</accession>
<accession>Q8WY16</accession>
<accession>Q8WY17</accession>
<dbReference type="EC" id="2.3.2.27" evidence="9 15"/>
<dbReference type="EMBL" id="AF302088">
    <property type="protein sequence ID" value="AAL55810.1"/>
    <property type="molecule type" value="mRNA"/>
</dbReference>
<dbReference type="EMBL" id="AF302089">
    <property type="protein sequence ID" value="AAL55811.1"/>
    <property type="molecule type" value="mRNA"/>
</dbReference>
<dbReference type="EMBL" id="DQ232883">
    <property type="protein sequence ID" value="ABB18376.1"/>
    <property type="molecule type" value="mRNA"/>
</dbReference>
<dbReference type="EMBL" id="AY305385">
    <property type="protein sequence ID" value="AAQ75551.1"/>
    <property type="molecule type" value="mRNA"/>
</dbReference>
<dbReference type="EMBL" id="AC122108">
    <property type="status" value="NOT_ANNOTATED_CDS"/>
    <property type="molecule type" value="Genomic_DNA"/>
</dbReference>
<dbReference type="EMBL" id="BC024199">
    <property type="protein sequence ID" value="AAH24199.1"/>
    <property type="status" value="ALT_TERM"/>
    <property type="molecule type" value="mRNA"/>
</dbReference>
<dbReference type="EMBL" id="BC033314">
    <property type="protein sequence ID" value="AAH33314.1"/>
    <property type="molecule type" value="mRNA"/>
</dbReference>
<dbReference type="EMBL" id="BC047945">
    <property type="protein sequence ID" value="AAH47945.1"/>
    <property type="molecule type" value="mRNA"/>
</dbReference>
<dbReference type="CCDS" id="CCDS10114.1">
    <molecule id="Q86WT6-2"/>
</dbReference>
<dbReference type="CCDS" id="CCDS32220.1">
    <molecule id="Q86WT6-1"/>
</dbReference>
<dbReference type="CCDS" id="CCDS73719.1">
    <molecule id="Q86WT6-3"/>
</dbReference>
<dbReference type="CCDS" id="CCDS76746.1">
    <molecule id="Q86WT6-4"/>
</dbReference>
<dbReference type="RefSeq" id="NP_001288073.1">
    <molecule id="Q86WT6-3"/>
    <property type="nucleotide sequence ID" value="NM_001301144.2"/>
</dbReference>
<dbReference type="RefSeq" id="NP_001288074.1">
    <molecule id="Q86WT6-4"/>
    <property type="nucleotide sequence ID" value="NM_001301145.2"/>
</dbReference>
<dbReference type="RefSeq" id="NP_001288075.1">
    <property type="nucleotide sequence ID" value="NM_001301146.1"/>
</dbReference>
<dbReference type="RefSeq" id="NP_542783.2">
    <molecule id="Q86WT6-2"/>
    <property type="nucleotide sequence ID" value="NM_080745.4"/>
</dbReference>
<dbReference type="RefSeq" id="NP_892030.3">
    <molecule id="Q86WT6-1"/>
    <property type="nucleotide sequence ID" value="NM_182985.4"/>
</dbReference>
<dbReference type="PDB" id="4NQJ">
    <property type="method" value="X-ray"/>
    <property type="resolution" value="2.15 A"/>
    <property type="chains" value="A/B/C=143-321"/>
</dbReference>
<dbReference type="PDB" id="6YXE">
    <property type="method" value="X-ray"/>
    <property type="resolution" value="2.10 A"/>
    <property type="chains" value="A/B=1-110"/>
</dbReference>
<dbReference type="PDBsum" id="4NQJ"/>
<dbReference type="PDBsum" id="6YXE"/>
<dbReference type="SMR" id="Q86WT6"/>
<dbReference type="BioGRID" id="126654">
    <property type="interactions" value="81"/>
</dbReference>
<dbReference type="FunCoup" id="Q86WT6">
    <property type="interactions" value="1263"/>
</dbReference>
<dbReference type="IntAct" id="Q86WT6">
    <property type="interactions" value="89"/>
</dbReference>
<dbReference type="MINT" id="Q86WT6"/>
<dbReference type="STRING" id="9606.ENSP00000453177"/>
<dbReference type="iPTMnet" id="Q86WT6"/>
<dbReference type="PhosphoSitePlus" id="Q86WT6"/>
<dbReference type="BioMuta" id="TRIM69"/>
<dbReference type="DMDM" id="229462760"/>
<dbReference type="jPOST" id="Q86WT6"/>
<dbReference type="MassIVE" id="Q86WT6"/>
<dbReference type="PaxDb" id="9606-ENSP00000453177"/>
<dbReference type="PeptideAtlas" id="Q86WT6"/>
<dbReference type="ProteomicsDB" id="70201">
    <molecule id="Q86WT6-1"/>
</dbReference>
<dbReference type="ProteomicsDB" id="70202">
    <molecule id="Q86WT6-2"/>
</dbReference>
<dbReference type="ProteomicsDB" id="70203">
    <molecule id="Q86WT6-3"/>
</dbReference>
<dbReference type="ProteomicsDB" id="70204">
    <molecule id="Q86WT6-4"/>
</dbReference>
<dbReference type="TopDownProteomics" id="Q86WT6-2">
    <molecule id="Q86WT6-2"/>
</dbReference>
<dbReference type="Antibodypedia" id="24281">
    <property type="antibodies" value="321 antibodies from 34 providers"/>
</dbReference>
<dbReference type="DNASU" id="140691"/>
<dbReference type="Ensembl" id="ENST00000329464.9">
    <molecule id="Q86WT6-1"/>
    <property type="protein sequence ID" value="ENSP00000332284.3"/>
    <property type="gene ID" value="ENSG00000185880.14"/>
</dbReference>
<dbReference type="Ensembl" id="ENST00000338264.8">
    <molecule id="Q86WT6-2"/>
    <property type="protein sequence ID" value="ENSP00000342922.4"/>
    <property type="gene ID" value="ENSG00000185880.14"/>
</dbReference>
<dbReference type="Ensembl" id="ENST00000558329.5">
    <molecule id="Q86WT6-4"/>
    <property type="protein sequence ID" value="ENSP00000453332.1"/>
    <property type="gene ID" value="ENSG00000185880.14"/>
</dbReference>
<dbReference type="Ensembl" id="ENST00000559390.5">
    <molecule id="Q86WT6-1"/>
    <property type="protein sequence ID" value="ENSP00000453177.1"/>
    <property type="gene ID" value="ENSG00000185880.14"/>
</dbReference>
<dbReference type="Ensembl" id="ENST00000560442.5">
    <molecule id="Q86WT6-3"/>
    <property type="protein sequence ID" value="ENSP00000453549.1"/>
    <property type="gene ID" value="ENSG00000185880.14"/>
</dbReference>
<dbReference type="Ensembl" id="ENST00000618398.2">
    <molecule id="Q86WT6-2"/>
    <property type="protein sequence ID" value="ENSP00000479720.1"/>
    <property type="gene ID" value="ENSG00000278211.4"/>
</dbReference>
<dbReference type="Ensembl" id="ENST00000631740.1">
    <molecule id="Q86WT6-4"/>
    <property type="protein sequence ID" value="ENSP00000488341.1"/>
    <property type="gene ID" value="ENSG00000278211.4"/>
</dbReference>
<dbReference type="Ensembl" id="ENST00000633106.1">
    <molecule id="Q86WT6-3"/>
    <property type="protein sequence ID" value="ENSP00000488084.1"/>
    <property type="gene ID" value="ENSG00000278211.4"/>
</dbReference>
<dbReference type="GeneID" id="140691"/>
<dbReference type="KEGG" id="hsa:140691"/>
<dbReference type="MANE-Select" id="ENST00000329464.9">
    <property type="protein sequence ID" value="ENSP00000332284.3"/>
    <property type="RefSeq nucleotide sequence ID" value="NM_182985.5"/>
    <property type="RefSeq protein sequence ID" value="NP_892030.3"/>
</dbReference>
<dbReference type="UCSC" id="uc001zuf.3">
    <molecule id="Q86WT6-1"/>
    <property type="organism name" value="human"/>
</dbReference>
<dbReference type="AGR" id="HGNC:17857"/>
<dbReference type="CTD" id="140691"/>
<dbReference type="DisGeNET" id="140691"/>
<dbReference type="GeneCards" id="TRIM69"/>
<dbReference type="HGNC" id="HGNC:17857">
    <property type="gene designation" value="TRIM69"/>
</dbReference>
<dbReference type="HPA" id="ENSG00000185880">
    <property type="expression patterns" value="Tissue enriched (testis)"/>
</dbReference>
<dbReference type="MIM" id="616017">
    <property type="type" value="gene"/>
</dbReference>
<dbReference type="neXtProt" id="NX_Q86WT6"/>
<dbReference type="OpenTargets" id="ENSG00000185880"/>
<dbReference type="PharmGKB" id="PA162407010"/>
<dbReference type="VEuPathDB" id="HostDB:ENSG00000185880"/>
<dbReference type="eggNOG" id="KOG2177">
    <property type="taxonomic scope" value="Eukaryota"/>
</dbReference>
<dbReference type="GeneTree" id="ENSGT00940000160707"/>
<dbReference type="HOGENOM" id="CLU_013137_0_3_1"/>
<dbReference type="InParanoid" id="Q86WT6"/>
<dbReference type="OMA" id="TEELTIH"/>
<dbReference type="OrthoDB" id="6270329at2759"/>
<dbReference type="PAN-GO" id="Q86WT6">
    <property type="GO annotations" value="3 GO annotations based on evolutionary models"/>
</dbReference>
<dbReference type="PhylomeDB" id="Q86WT6"/>
<dbReference type="TreeFam" id="TF342569"/>
<dbReference type="BRENDA" id="2.3.2.27">
    <property type="organism ID" value="2681"/>
</dbReference>
<dbReference type="PathwayCommons" id="Q86WT6"/>
<dbReference type="Reactome" id="R-HSA-983168">
    <property type="pathway name" value="Antigen processing: Ubiquitination &amp; Proteasome degradation"/>
</dbReference>
<dbReference type="SignaLink" id="Q86WT6"/>
<dbReference type="SIGNOR" id="Q86WT6"/>
<dbReference type="UniPathway" id="UPA00143"/>
<dbReference type="BioGRID-ORCS" id="140691">
    <property type="hits" value="3 hits in 1187 CRISPR screens"/>
</dbReference>
<dbReference type="CD-CODE" id="804901D1">
    <property type="entry name" value="Nuclear speckle"/>
</dbReference>
<dbReference type="ChiTaRS" id="TRIM69">
    <property type="organism name" value="human"/>
</dbReference>
<dbReference type="EvolutionaryTrace" id="Q86WT6"/>
<dbReference type="GenomeRNAi" id="140691"/>
<dbReference type="Pharos" id="Q86WT6">
    <property type="development level" value="Tbio"/>
</dbReference>
<dbReference type="PRO" id="PR:Q86WT6"/>
<dbReference type="Proteomes" id="UP000005640">
    <property type="component" value="Chromosome 15"/>
</dbReference>
<dbReference type="RNAct" id="Q86WT6">
    <property type="molecule type" value="protein"/>
</dbReference>
<dbReference type="Bgee" id="ENSG00000185880">
    <property type="expression patterns" value="Expressed in granulocyte and 113 other cell types or tissues"/>
</dbReference>
<dbReference type="ExpressionAtlas" id="Q86WT6">
    <property type="expression patterns" value="baseline and differential"/>
</dbReference>
<dbReference type="GO" id="GO:0005813">
    <property type="term" value="C:centrosome"/>
    <property type="evidence" value="ECO:0000314"/>
    <property type="project" value="UniProt"/>
</dbReference>
<dbReference type="GO" id="GO:0005737">
    <property type="term" value="C:cytoplasm"/>
    <property type="evidence" value="ECO:0000314"/>
    <property type="project" value="UniProtKB"/>
</dbReference>
<dbReference type="GO" id="GO:0005829">
    <property type="term" value="C:cytosol"/>
    <property type="evidence" value="ECO:0000304"/>
    <property type="project" value="Reactome"/>
</dbReference>
<dbReference type="GO" id="GO:0016607">
    <property type="term" value="C:nuclear speck"/>
    <property type="evidence" value="ECO:0000314"/>
    <property type="project" value="UniProtKB"/>
</dbReference>
<dbReference type="GO" id="GO:0005634">
    <property type="term" value="C:nucleus"/>
    <property type="evidence" value="ECO:0000314"/>
    <property type="project" value="UniProtKB"/>
</dbReference>
<dbReference type="GO" id="GO:0042802">
    <property type="term" value="F:identical protein binding"/>
    <property type="evidence" value="ECO:0000353"/>
    <property type="project" value="IntAct"/>
</dbReference>
<dbReference type="GO" id="GO:0061630">
    <property type="term" value="F:ubiquitin protein ligase activity"/>
    <property type="evidence" value="ECO:0000314"/>
    <property type="project" value="UniProt"/>
</dbReference>
<dbReference type="GO" id="GO:0004842">
    <property type="term" value="F:ubiquitin-protein transferase activity"/>
    <property type="evidence" value="ECO:0000314"/>
    <property type="project" value="UniProtKB"/>
</dbReference>
<dbReference type="GO" id="GO:0008270">
    <property type="term" value="F:zinc ion binding"/>
    <property type="evidence" value="ECO:0007669"/>
    <property type="project" value="UniProtKB-KW"/>
</dbReference>
<dbReference type="GO" id="GO:0006915">
    <property type="term" value="P:apoptotic process"/>
    <property type="evidence" value="ECO:0007669"/>
    <property type="project" value="UniProtKB-KW"/>
</dbReference>
<dbReference type="GO" id="GO:0045087">
    <property type="term" value="P:innate immune response"/>
    <property type="evidence" value="ECO:0000318"/>
    <property type="project" value="GO_Central"/>
</dbReference>
<dbReference type="GO" id="GO:0071539">
    <property type="term" value="P:protein localization to centrosome"/>
    <property type="evidence" value="ECO:0000314"/>
    <property type="project" value="UniProt"/>
</dbReference>
<dbReference type="GO" id="GO:0016567">
    <property type="term" value="P:protein ubiquitination"/>
    <property type="evidence" value="ECO:0007669"/>
    <property type="project" value="UniProtKB-UniPathway"/>
</dbReference>
<dbReference type="CDD" id="cd16611">
    <property type="entry name" value="RING-HC_TRIM69_C-IV"/>
    <property type="match status" value="1"/>
</dbReference>
<dbReference type="CDD" id="cd15818">
    <property type="entry name" value="SPRY_PRY_TRIM69"/>
    <property type="match status" value="1"/>
</dbReference>
<dbReference type="FunFam" id="2.60.120.920:FF:000058">
    <property type="entry name" value="E3 ubiquitin-protein ligase TRIM69"/>
    <property type="match status" value="1"/>
</dbReference>
<dbReference type="FunFam" id="3.30.160.60:FF:002162">
    <property type="entry name" value="E3 ubiquitin-protein ligase TRIM69"/>
    <property type="match status" value="1"/>
</dbReference>
<dbReference type="FunFam" id="3.30.40.10:FF:000583">
    <property type="entry name" value="E3 ubiquitin-protein ligase TRIM69"/>
    <property type="match status" value="1"/>
</dbReference>
<dbReference type="Gene3D" id="2.60.120.920">
    <property type="match status" value="1"/>
</dbReference>
<dbReference type="Gene3D" id="3.30.160.60">
    <property type="entry name" value="Classic Zinc Finger"/>
    <property type="match status" value="1"/>
</dbReference>
<dbReference type="Gene3D" id="3.30.40.10">
    <property type="entry name" value="Zinc/RING finger domain, C3HC4 (zinc finger)"/>
    <property type="match status" value="1"/>
</dbReference>
<dbReference type="InterPro" id="IPR001870">
    <property type="entry name" value="B30.2/SPRY"/>
</dbReference>
<dbReference type="InterPro" id="IPR043136">
    <property type="entry name" value="B30.2/SPRY_sf"/>
</dbReference>
<dbReference type="InterPro" id="IPR003879">
    <property type="entry name" value="Butyrophylin_SPRY"/>
</dbReference>
<dbReference type="InterPro" id="IPR013320">
    <property type="entry name" value="ConA-like_dom_sf"/>
</dbReference>
<dbReference type="InterPro" id="IPR006574">
    <property type="entry name" value="PRY"/>
</dbReference>
<dbReference type="InterPro" id="IPR003877">
    <property type="entry name" value="SPRY_dom"/>
</dbReference>
<dbReference type="InterPro" id="IPR050143">
    <property type="entry name" value="TRIM/RBCC"/>
</dbReference>
<dbReference type="InterPro" id="IPR001841">
    <property type="entry name" value="Znf_RING"/>
</dbReference>
<dbReference type="InterPro" id="IPR013083">
    <property type="entry name" value="Znf_RING/FYVE/PHD"/>
</dbReference>
<dbReference type="InterPro" id="IPR017907">
    <property type="entry name" value="Znf_RING_CS"/>
</dbReference>
<dbReference type="PANTHER" id="PTHR24103">
    <property type="entry name" value="E3 UBIQUITIN-PROTEIN LIGASE TRIM"/>
    <property type="match status" value="1"/>
</dbReference>
<dbReference type="Pfam" id="PF13765">
    <property type="entry name" value="PRY"/>
    <property type="match status" value="1"/>
</dbReference>
<dbReference type="Pfam" id="PF00622">
    <property type="entry name" value="SPRY"/>
    <property type="match status" value="1"/>
</dbReference>
<dbReference type="Pfam" id="PF15227">
    <property type="entry name" value="zf-C3HC4_4"/>
    <property type="match status" value="1"/>
</dbReference>
<dbReference type="PRINTS" id="PR01407">
    <property type="entry name" value="BUTYPHLNCDUF"/>
</dbReference>
<dbReference type="SMART" id="SM00589">
    <property type="entry name" value="PRY"/>
    <property type="match status" value="1"/>
</dbReference>
<dbReference type="SMART" id="SM00184">
    <property type="entry name" value="RING"/>
    <property type="match status" value="1"/>
</dbReference>
<dbReference type="SMART" id="SM00449">
    <property type="entry name" value="SPRY"/>
    <property type="match status" value="1"/>
</dbReference>
<dbReference type="SUPFAM" id="SSF57845">
    <property type="entry name" value="B-box zinc-binding domain"/>
    <property type="match status" value="1"/>
</dbReference>
<dbReference type="SUPFAM" id="SSF49899">
    <property type="entry name" value="Concanavalin A-like lectins/glucanases"/>
    <property type="match status" value="1"/>
</dbReference>
<dbReference type="SUPFAM" id="SSF57850">
    <property type="entry name" value="RING/U-box"/>
    <property type="match status" value="1"/>
</dbReference>
<dbReference type="PROSITE" id="PS50188">
    <property type="entry name" value="B302_SPRY"/>
    <property type="match status" value="1"/>
</dbReference>
<dbReference type="PROSITE" id="PS00518">
    <property type="entry name" value="ZF_RING_1"/>
    <property type="match status" value="1"/>
</dbReference>
<dbReference type="PROSITE" id="PS50089">
    <property type="entry name" value="ZF_RING_2"/>
    <property type="match status" value="1"/>
</dbReference>
<gene>
    <name type="primary">TRIM69</name>
    <name type="synonym">RNF36</name>
    <name type="ORF">HSD-34</name>
    <name type="ORF">HSD34</name>
</gene>
<keyword id="KW-0002">3D-structure</keyword>
<keyword id="KW-0025">Alternative splicing</keyword>
<keyword id="KW-0053">Apoptosis</keyword>
<keyword id="KW-0175">Coiled coil</keyword>
<keyword id="KW-0963">Cytoplasm</keyword>
<keyword id="KW-0206">Cytoskeleton</keyword>
<keyword id="KW-0479">Metal-binding</keyword>
<keyword id="KW-0539">Nucleus</keyword>
<keyword id="KW-0597">Phosphoprotein</keyword>
<keyword id="KW-1267">Proteomics identification</keyword>
<keyword id="KW-1185">Reference proteome</keyword>
<keyword id="KW-0808">Transferase</keyword>
<keyword id="KW-0833">Ubl conjugation pathway</keyword>
<keyword id="KW-0862">Zinc</keyword>
<keyword id="KW-0863">Zinc-finger</keyword>
<feature type="chain" id="PRO_0000278236" description="E3 ubiquitin-protein ligase TRIM69">
    <location>
        <begin position="1"/>
        <end position="500"/>
    </location>
</feature>
<feature type="domain" description="B30.2/SPRY" evidence="6">
    <location>
        <begin position="305"/>
        <end position="500"/>
    </location>
</feature>
<feature type="zinc finger region" description="RING-type" evidence="5">
    <location>
        <begin position="41"/>
        <end position="82"/>
    </location>
</feature>
<feature type="region of interest" description="Necessary for nuclear localization" evidence="1">
    <location>
        <begin position="1"/>
        <end position="152"/>
    </location>
</feature>
<feature type="coiled-coil region" evidence="4">
    <location>
        <begin position="161"/>
        <end position="255"/>
    </location>
</feature>
<feature type="modified residue" description="Phosphoserine" evidence="2">
    <location>
        <position position="341"/>
    </location>
</feature>
<feature type="splice variant" id="VSP_023200" description="In isoform 3 and isoform 4." evidence="17">
    <location>
        <begin position="1"/>
        <end position="204"/>
    </location>
</feature>
<feature type="splice variant" id="VSP_023201" description="In isoform 2." evidence="16">
    <location>
        <begin position="3"/>
        <end position="161"/>
    </location>
</feature>
<feature type="splice variant" id="VSP_023202" description="In isoform 4." evidence="17">
    <location>
        <begin position="255"/>
        <end position="271"/>
    </location>
</feature>
<feature type="sequence variant" id="VAR_057226" description="In dbSNP:rs2444007.">
    <original>D</original>
    <variation>N</variation>
    <location>
        <position position="12"/>
    </location>
</feature>
<feature type="sequence variant" id="VAR_057227" description="In dbSNP:rs2470911." evidence="7">
    <original>D</original>
    <variation>N</variation>
    <location>
        <position position="15"/>
    </location>
</feature>
<feature type="sequence variant" id="VAR_030704" description="In dbSNP:rs3759880.">
    <original>V</original>
    <variation>A</variation>
    <location>
        <position position="31"/>
    </location>
</feature>
<feature type="sequence variant" id="VAR_057228" description="In dbSNP:rs17588988.">
    <original>K</original>
    <variation>R</variation>
    <location>
        <position position="104"/>
    </location>
</feature>
<feature type="sequence variant" id="VAR_057229" description="In dbSNP:rs3100139." evidence="7">
    <original>T</original>
    <variation>M</variation>
    <location>
        <position position="161"/>
    </location>
</feature>
<feature type="sequence variant" id="VAR_057230" description="In dbSNP:rs3759880.">
    <original>A</original>
    <variation>V</variation>
    <location>
        <position position="190"/>
    </location>
</feature>
<feature type="mutagenesis site" description="Loss of E3 ubiquitin-protein ligase activity; when associated with A-64." evidence="8 9 14">
    <original>C</original>
    <variation>A</variation>
    <location>
        <position position="61"/>
    </location>
</feature>
<feature type="mutagenesis site" description="Loss of E3 ubiquitin-protein ligase activity; when associated with A-61." evidence="8 9 14">
    <original>C</original>
    <variation>A</variation>
    <location>
        <position position="64"/>
    </location>
</feature>
<feature type="mutagenesis site" description="Loss of antiviral activity; able to form dimers but not higher-order multimers; when associated with A-96." evidence="12">
    <original>V</original>
    <variation>A</variation>
    <location>
        <position position="95"/>
    </location>
</feature>
<feature type="mutagenesis site" description="Loss of antiviral activity; able to form dimers but not higher-order multimers; when associated with A-91." evidence="12">
    <original>L</original>
    <variation>A</variation>
    <location>
        <position position="96"/>
    </location>
</feature>
<feature type="mutagenesis site" description="Loss of antiviral activity; able to form dimers but not higher-order multimers." evidence="12">
    <original>L</original>
    <variation>A</variation>
    <location>
        <position position="99"/>
    </location>
</feature>
<feature type="sequence conflict" description="In Ref. 3; AAQ75551." evidence="18" ref="3">
    <original>S</original>
    <variation>G</variation>
    <location>
        <position position="469"/>
    </location>
</feature>
<feature type="helix" evidence="21">
    <location>
        <begin position="28"/>
        <end position="38"/>
    </location>
</feature>
<feature type="turn" evidence="21">
    <location>
        <begin position="42"/>
        <end position="44"/>
    </location>
</feature>
<feature type="strand" evidence="21">
    <location>
        <begin position="45"/>
        <end position="47"/>
    </location>
</feature>
<feature type="strand" evidence="21">
    <location>
        <begin position="49"/>
        <end position="53"/>
    </location>
</feature>
<feature type="strand" evidence="21">
    <location>
        <begin position="59"/>
        <end position="61"/>
    </location>
</feature>
<feature type="helix" evidence="21">
    <location>
        <begin position="62"/>
        <end position="71"/>
    </location>
</feature>
<feature type="turn" evidence="21">
    <location>
        <begin position="79"/>
        <end position="81"/>
    </location>
</feature>
<feature type="helix" evidence="21">
    <location>
        <begin position="87"/>
        <end position="89"/>
    </location>
</feature>
<feature type="helix" evidence="21">
    <location>
        <begin position="94"/>
        <end position="103"/>
    </location>
</feature>
<feature type="helix" evidence="20">
    <location>
        <begin position="144"/>
        <end position="148"/>
    </location>
</feature>
<feature type="helix" evidence="20">
    <location>
        <begin position="153"/>
        <end position="260"/>
    </location>
</feature>
<feature type="helix" evidence="20">
    <location>
        <begin position="266"/>
        <end position="271"/>
    </location>
</feature>
<feature type="helix" evidence="20">
    <location>
        <begin position="273"/>
        <end position="287"/>
    </location>
</feature>
<feature type="helix" evidence="20">
    <location>
        <begin position="298"/>
        <end position="301"/>
    </location>
</feature>
<feature type="helix" evidence="20">
    <location>
        <begin position="305"/>
        <end position="318"/>
    </location>
</feature>
<proteinExistence type="evidence at protein level"/>
<evidence type="ECO:0000250" key="1"/>
<evidence type="ECO:0000250" key="2">
    <source>
        <dbReference type="UniProtKB" id="Q5BK82"/>
    </source>
</evidence>
<evidence type="ECO:0000250" key="3">
    <source>
        <dbReference type="UniProtKB" id="Q80X56"/>
    </source>
</evidence>
<evidence type="ECO:0000255" key="4"/>
<evidence type="ECO:0000255" key="5">
    <source>
        <dbReference type="PROSITE-ProRule" id="PRU00175"/>
    </source>
</evidence>
<evidence type="ECO:0000255" key="6">
    <source>
        <dbReference type="PROSITE-ProRule" id="PRU00548"/>
    </source>
</evidence>
<evidence type="ECO:0000269" key="7">
    <source>
    </source>
</evidence>
<evidence type="ECO:0000269" key="8">
    <source>
    </source>
</evidence>
<evidence type="ECO:0000269" key="9">
    <source>
    </source>
</evidence>
<evidence type="ECO:0000269" key="10">
    <source>
    </source>
</evidence>
<evidence type="ECO:0000269" key="11">
    <source>
    </source>
</evidence>
<evidence type="ECO:0000269" key="12">
    <source>
    </source>
</evidence>
<evidence type="ECO:0000269" key="13">
    <source>
    </source>
</evidence>
<evidence type="ECO:0000269" key="14">
    <source>
    </source>
</evidence>
<evidence type="ECO:0000269" key="15">
    <source>
    </source>
</evidence>
<evidence type="ECO:0000303" key="16">
    <source>
    </source>
</evidence>
<evidence type="ECO:0000303" key="17">
    <source ref="1"/>
</evidence>
<evidence type="ECO:0000305" key="18"/>
<evidence type="ECO:0007744" key="19">
    <source>
        <dbReference type="PDB" id="6YXE"/>
    </source>
</evidence>
<evidence type="ECO:0007829" key="20">
    <source>
        <dbReference type="PDB" id="4NQJ"/>
    </source>
</evidence>
<evidence type="ECO:0007829" key="21">
    <source>
        <dbReference type="PDB" id="6YXE"/>
    </source>
</evidence>
<protein>
    <recommendedName>
        <fullName>E3 ubiquitin-protein ligase TRIM69</fullName>
        <ecNumber evidence="9 15">2.3.2.27</ecNumber>
    </recommendedName>
    <alternativeName>
        <fullName>RFP-like domain-containing protein trimless</fullName>
    </alternativeName>
    <alternativeName>
        <fullName>RING finger protein 36</fullName>
    </alternativeName>
    <alternativeName>
        <fullName evidence="18">RING-type E3 ubiquitin transferase TRIM69</fullName>
    </alternativeName>
    <alternativeName>
        <fullName>Tripartite motif-containing protein 69</fullName>
    </alternativeName>
</protein>
<organism>
    <name type="scientific">Homo sapiens</name>
    <name type="common">Human</name>
    <dbReference type="NCBI Taxonomy" id="9606"/>
    <lineage>
        <taxon>Eukaryota</taxon>
        <taxon>Metazoa</taxon>
        <taxon>Chordata</taxon>
        <taxon>Craniata</taxon>
        <taxon>Vertebrata</taxon>
        <taxon>Euteleostomi</taxon>
        <taxon>Mammalia</taxon>
        <taxon>Eutheria</taxon>
        <taxon>Euarchontoglires</taxon>
        <taxon>Primates</taxon>
        <taxon>Haplorrhini</taxon>
        <taxon>Catarrhini</taxon>
        <taxon>Hominidae</taxon>
        <taxon>Homo</taxon>
    </lineage>
</organism>
<comment type="function">
    <text evidence="8 9 10 11 12 14 15">E3 ubiquitin ligase that plays an important role in antiviral immunity by restricting different viral infections including dengue virus or vesicular stomatitis indiana virus (PubMed:23131556, PubMed:30142214, PubMed:31375575, PubMed:31578292). Ubiquitinates viral proteins such as dengue virus NS3 thereby limiting infection (PubMed:30844644). In addition, acts as a key mediator of type I interferon induced microtubule stabilization by directly associating to microtubules independently of its E3 ligase activity (PubMed:36251989). Also plays a role in cataract formation together with TP53 (PubMed:30844644). Mechanistically, inhibits UVB-induced cell apoptosis and reactive oxygen species (ROS) production by inducing TP53 ubiquitination (PubMed:30844644). Regulates centrosome dynamics and mitotic progression by ubiquitinating STK3/MST2; leading to its redistribution to the perinuclear cytoskeleton and subsequent phosphorylation by PLK1 (PubMed:37739411).</text>
</comment>
<comment type="catalytic activity">
    <reaction evidence="9 15">
        <text>S-ubiquitinyl-[E2 ubiquitin-conjugating enzyme]-L-cysteine + [acceptor protein]-L-lysine = [E2 ubiquitin-conjugating enzyme]-L-cysteine + N(6)-ubiquitinyl-[acceptor protein]-L-lysine.</text>
        <dbReference type="EC" id="2.3.2.27"/>
    </reaction>
</comment>
<comment type="pathway">
    <text>Protein modification; protein ubiquitination.</text>
</comment>
<comment type="subunit">
    <text evidence="3 12 13">Homo-multimer; required for antiviral activity (PubMed:31578292, PubMed:33021497). Interacts with PML (By similarity).</text>
</comment>
<comment type="interaction">
    <interactant intactId="EBI-749955">
        <id>Q86WT6</id>
    </interactant>
    <interactant intactId="EBI-722989">
        <id>P08243</id>
        <label>ASNS</label>
    </interactant>
    <organismsDiffer>false</organismsDiffer>
    <experiments>4</experiments>
</comment>
<comment type="interaction">
    <interactant intactId="EBI-749955">
        <id>Q86WT6</id>
    </interactant>
    <interactant intactId="EBI-10194585">
        <id>P05496</id>
        <label>ATP5MC1</label>
    </interactant>
    <organismsDiffer>false</organismsDiffer>
    <experiments>4</experiments>
</comment>
<comment type="interaction">
    <interactant intactId="EBI-749955">
        <id>Q86WT6</id>
    </interactant>
    <interactant intactId="EBI-10185025">
        <id>Q86TH3</id>
        <label>DVL1</label>
    </interactant>
    <organismsDiffer>false</organismsDiffer>
    <experiments>3</experiments>
</comment>
<comment type="interaction">
    <interactant intactId="EBI-749955">
        <id>Q86WT6</id>
    </interactant>
    <interactant intactId="EBI-1752811">
        <id>Q9BQ89</id>
        <label>FAM110A</label>
    </interactant>
    <organismsDiffer>false</organismsDiffer>
    <experiments>3</experiments>
</comment>
<comment type="interaction">
    <interactant intactId="EBI-749955">
        <id>Q86WT6</id>
    </interactant>
    <interactant intactId="EBI-6693977">
        <id>P68106</id>
        <label>FKBP1B</label>
    </interactant>
    <organismsDiffer>false</organismsDiffer>
    <experiments>3</experiments>
</comment>
<comment type="interaction">
    <interactant intactId="EBI-749955">
        <id>Q86WT6</id>
    </interactant>
    <interactant intactId="EBI-2514791">
        <id>Q96CS2</id>
        <label>HAUS1</label>
    </interactant>
    <organismsDiffer>false</organismsDiffer>
    <experiments>3</experiments>
</comment>
<comment type="interaction">
    <interactant intactId="EBI-749955">
        <id>Q86WT6</id>
    </interactant>
    <interactant intactId="EBI-10253668">
        <id>Q6PHW0</id>
        <label>IYD</label>
    </interactant>
    <organismsDiffer>false</organismsDiffer>
    <experiments>3</experiments>
</comment>
<comment type="interaction">
    <interactant intactId="EBI-749955">
        <id>Q86WT6</id>
    </interactant>
    <interactant intactId="EBI-297873">
        <id>Q04695</id>
        <label>KRT17</label>
    </interactant>
    <organismsDiffer>false</organismsDiffer>
    <experiments>3</experiments>
</comment>
<comment type="interaction">
    <interactant intactId="EBI-749955">
        <id>Q86WT6</id>
    </interactant>
    <interactant intactId="EBI-3940258">
        <id>Q659C4</id>
        <label>LARP1B</label>
    </interactant>
    <organismsDiffer>false</organismsDiffer>
    <experiments>3</experiments>
</comment>
<comment type="interaction">
    <interactant intactId="EBI-749955">
        <id>Q86WT6</id>
    </interactant>
    <interactant intactId="EBI-743122">
        <id>P43358</id>
        <label>MAGEA4</label>
    </interactant>
    <organismsDiffer>false</organismsDiffer>
    <experiments>3</experiments>
</comment>
<comment type="interaction">
    <interactant intactId="EBI-749955">
        <id>Q86WT6</id>
    </interactant>
    <interactant intactId="EBI-10194128">
        <id>Q1RN33</id>
        <label>MAGEA4</label>
    </interactant>
    <organismsDiffer>false</organismsDiffer>
    <experiments>3</experiments>
</comment>
<comment type="interaction">
    <interactant intactId="EBI-749955">
        <id>Q86WT6</id>
    </interactant>
    <interactant intactId="EBI-1752987">
        <id>Q86SG6</id>
        <label>NEK8</label>
    </interactant>
    <organismsDiffer>false</organismsDiffer>
    <experiments>3</experiments>
</comment>
<comment type="interaction">
    <interactant intactId="EBI-749955">
        <id>Q86WT6</id>
    </interactant>
    <interactant intactId="EBI-2557469">
        <id>Q6NYC8</id>
        <label>PPP1R18</label>
    </interactant>
    <organismsDiffer>false</organismsDiffer>
    <experiments>3</experiments>
</comment>
<comment type="interaction">
    <interactant intactId="EBI-749955">
        <id>Q86WT6</id>
    </interactant>
    <interactant intactId="EBI-10253121">
        <id>Q6P9E2</id>
        <label>RECK</label>
    </interactant>
    <organismsDiffer>false</organismsDiffer>
    <experiments>3</experiments>
</comment>
<comment type="interaction">
    <interactant intactId="EBI-749955">
        <id>Q86WT6</id>
    </interactant>
    <interactant intactId="EBI-748350">
        <id>Q9UHP6</id>
        <label>RSPH14</label>
    </interactant>
    <organismsDiffer>false</organismsDiffer>
    <experiments>3</experiments>
</comment>
<comment type="interaction">
    <interactant intactId="EBI-749955">
        <id>Q86WT6</id>
    </interactant>
    <interactant intactId="EBI-744603">
        <id>Q15637</id>
        <label>SF1</label>
    </interactant>
    <organismsDiffer>false</organismsDiffer>
    <experiments>3</experiments>
</comment>
<comment type="interaction">
    <interactant intactId="EBI-749955">
        <id>Q86WT6</id>
    </interactant>
    <interactant intactId="EBI-1051880">
        <id>Q12874</id>
        <label>SF3A3</label>
    </interactant>
    <organismsDiffer>false</organismsDiffer>
    <experiments>3</experiments>
</comment>
<comment type="interaction">
    <interactant intactId="EBI-749955">
        <id>Q86WT6</id>
    </interactant>
    <interactant intactId="EBI-7131783">
        <id>Q8N205</id>
        <label>SYNE4</label>
    </interactant>
    <organismsDiffer>false</organismsDiffer>
    <experiments>3</experiments>
</comment>
<comment type="interaction">
    <interactant intactId="EBI-749955">
        <id>Q86WT6</id>
    </interactant>
    <interactant intactId="EBI-8787399">
        <id>Q96DX7</id>
        <label>TRIM44</label>
    </interactant>
    <organismsDiffer>false</organismsDiffer>
    <experiments>3</experiments>
</comment>
<comment type="interaction">
    <interactant intactId="EBI-749955">
        <id>Q86WT6</id>
    </interactant>
    <interactant intactId="EBI-10196963">
        <id>Q6P088</id>
        <label>ZNF483</label>
    </interactant>
    <organismsDiffer>false</organismsDiffer>
    <experiments>3</experiments>
</comment>
<comment type="interaction">
    <interactant intactId="EBI-11525489">
        <id>Q86WT6-2</id>
    </interactant>
    <interactant intactId="EBI-640741">
        <id>P01023</id>
        <label>A2M</label>
    </interactant>
    <organismsDiffer>false</organismsDiffer>
    <experiments>3</experiments>
</comment>
<comment type="interaction">
    <interactant intactId="EBI-11525489">
        <id>Q86WT6-2</id>
    </interactant>
    <interactant intactId="EBI-3927856">
        <id>P08319</id>
        <label>ADH4</label>
    </interactant>
    <organismsDiffer>false</organismsDiffer>
    <experiments>3</experiments>
</comment>
<comment type="interaction">
    <interactant intactId="EBI-11525489">
        <id>Q86WT6-2</id>
    </interactant>
    <interactant intactId="EBI-3956936">
        <id>Q9BRQ8</id>
        <label>AIFM2</label>
    </interactant>
    <organismsDiffer>false</organismsDiffer>
    <experiments>3</experiments>
</comment>
<comment type="interaction">
    <interactant intactId="EBI-11525489">
        <id>Q86WT6-2</id>
    </interactant>
    <interactant intactId="EBI-25830928">
        <id>P02768-3</id>
        <label>ALB</label>
    </interactant>
    <organismsDiffer>false</organismsDiffer>
    <experiments>3</experiments>
</comment>
<comment type="interaction">
    <interactant intactId="EBI-11525489">
        <id>Q86WT6-2</id>
    </interactant>
    <interactant intactId="EBI-722989">
        <id>P08243</id>
        <label>ASNS</label>
    </interactant>
    <organismsDiffer>false</organismsDiffer>
    <experiments>3</experiments>
</comment>
<comment type="interaction">
    <interactant intactId="EBI-11525489">
        <id>Q86WT6-2</id>
    </interactant>
    <interactant intactId="EBI-10194585">
        <id>P05496</id>
        <label>ATP5MC1</label>
    </interactant>
    <organismsDiffer>false</organismsDiffer>
    <experiments>3</experiments>
</comment>
<comment type="interaction">
    <interactant intactId="EBI-11525489">
        <id>Q86WT6-2</id>
    </interactant>
    <interactant intactId="EBI-930964">
        <id>P54253</id>
        <label>ATXN1</label>
    </interactant>
    <organismsDiffer>false</organismsDiffer>
    <experiments>6</experiments>
</comment>
<comment type="interaction">
    <interactant intactId="EBI-11525489">
        <id>Q86WT6-2</id>
    </interactant>
    <interactant intactId="EBI-10988864">
        <id>P46379-2</id>
        <label>BAG6</label>
    </interactant>
    <organismsDiffer>false</organismsDiffer>
    <experiments>3</experiments>
</comment>
<comment type="interaction">
    <interactant intactId="EBI-11525489">
        <id>Q86WT6-2</id>
    </interactant>
    <interactant intactId="EBI-745073">
        <id>Q9BXY8</id>
        <label>BEX2</label>
    </interactant>
    <organismsDiffer>false</organismsDiffer>
    <experiments>3</experiments>
</comment>
<comment type="interaction">
    <interactant intactId="EBI-11525489">
        <id>Q86WT6-2</id>
    </interactant>
    <interactant intactId="EBI-2653038">
        <id>Q9NQY0</id>
        <label>BIN3</label>
    </interactant>
    <organismsDiffer>false</organismsDiffer>
    <experiments>3</experiments>
</comment>
<comment type="interaction">
    <interactant intactId="EBI-11525489">
        <id>Q86WT6-2</id>
    </interactant>
    <interactant intactId="EBI-718729">
        <id>P55212</id>
        <label>CASP6</label>
    </interactant>
    <organismsDiffer>false</organismsDiffer>
    <experiments>3</experiments>
</comment>
<comment type="interaction">
    <interactant intactId="EBI-11525489">
        <id>Q86WT6-2</id>
    </interactant>
    <interactant intactId="EBI-25837549">
        <id>P28329-3</id>
        <label>CHAT</label>
    </interactant>
    <organismsDiffer>false</organismsDiffer>
    <experiments>3</experiments>
</comment>
<comment type="interaction">
    <interactant intactId="EBI-11525489">
        <id>Q86WT6-2</id>
    </interactant>
    <interactant intactId="EBI-8589586">
        <id>P09172</id>
        <label>DBH</label>
    </interactant>
    <organismsDiffer>false</organismsDiffer>
    <experiments>3</experiments>
</comment>
<comment type="interaction">
    <interactant intactId="EBI-11525489">
        <id>Q86WT6-2</id>
    </interactant>
    <interactant intactId="EBI-742054">
        <id>Q96D03</id>
        <label>DDIT4L</label>
    </interactant>
    <organismsDiffer>false</organismsDiffer>
    <experiments>3</experiments>
</comment>
<comment type="interaction">
    <interactant intactId="EBI-11525489">
        <id>Q86WT6-2</id>
    </interactant>
    <interactant intactId="EBI-10976677">
        <id>G5E9A7</id>
        <label>DMWD</label>
    </interactant>
    <organismsDiffer>false</organismsDiffer>
    <experiments>3</experiments>
</comment>
<comment type="interaction">
    <interactant intactId="EBI-11525489">
        <id>Q86WT6-2</id>
    </interactant>
    <interactant intactId="EBI-2870454">
        <id>Q16134</id>
        <label>ETFDH</label>
    </interactant>
    <organismsDiffer>false</organismsDiffer>
    <experiments>3</experiments>
</comment>
<comment type="interaction">
    <interactant intactId="EBI-11525489">
        <id>Q86WT6-2</id>
    </interactant>
    <interactant intactId="EBI-1752811">
        <id>Q9BQ89</id>
        <label>FAM110A</label>
    </interactant>
    <organismsDiffer>false</organismsDiffer>
    <experiments>6</experiments>
</comment>
<comment type="interaction">
    <interactant intactId="EBI-11525489">
        <id>Q86WT6-2</id>
    </interactant>
    <interactant intactId="EBI-719941">
        <id>Q3B820</id>
        <label>FAM161A</label>
    </interactant>
    <organismsDiffer>false</organismsDiffer>
    <experiments>3</experiments>
</comment>
<comment type="interaction">
    <interactant intactId="EBI-11525489">
        <id>Q86WT6-2</id>
    </interactant>
    <interactant intactId="EBI-6658203">
        <id>Q86YD7</id>
        <label>FAM90A1</label>
    </interactant>
    <organismsDiffer>false</organismsDiffer>
    <experiments>3</experiments>
</comment>
<comment type="interaction">
    <interactant intactId="EBI-11525489">
        <id>Q86WT6-2</id>
    </interactant>
    <interactant intactId="EBI-348399">
        <id>P22607</id>
        <label>FGFR3</label>
    </interactant>
    <organismsDiffer>false</organismsDiffer>
    <experiments>3</experiments>
</comment>
<comment type="interaction">
    <interactant intactId="EBI-11525489">
        <id>Q86WT6-2</id>
    </interactant>
    <interactant intactId="EBI-11998976">
        <id>P68106-2</id>
        <label>FKBP1B</label>
    </interactant>
    <organismsDiffer>false</organismsDiffer>
    <experiments>3</experiments>
</comment>
<comment type="interaction">
    <interactant intactId="EBI-11525489">
        <id>Q86WT6-2</id>
    </interactant>
    <interactant intactId="EBI-744104">
        <id>P55040</id>
        <label>GEM</label>
    </interactant>
    <organismsDiffer>false</organismsDiffer>
    <experiments>3</experiments>
</comment>
<comment type="interaction">
    <interactant intactId="EBI-11525489">
        <id>Q86WT6-2</id>
    </interactant>
    <interactant intactId="EBI-744302">
        <id>P14136</id>
        <label>GFAP</label>
    </interactant>
    <organismsDiffer>false</organismsDiffer>
    <experiments>3</experiments>
</comment>
<comment type="interaction">
    <interactant intactId="EBI-11525489">
        <id>Q86WT6-2</id>
    </interactant>
    <interactant intactId="EBI-1955541">
        <id>Q53GS7</id>
        <label>GLE1</label>
    </interactant>
    <organismsDiffer>false</organismsDiffer>
    <experiments>3</experiments>
</comment>
<comment type="interaction">
    <interactant intactId="EBI-11525489">
        <id>Q86WT6-2</id>
    </interactant>
    <interactant intactId="EBI-351506">
        <id>P06396</id>
        <label>GSN</label>
    </interactant>
    <organismsDiffer>false</organismsDiffer>
    <experiments>3</experiments>
</comment>
<comment type="interaction">
    <interactant intactId="EBI-11525489">
        <id>Q86WT6-2</id>
    </interactant>
    <interactant intactId="EBI-2514791">
        <id>Q96CS2</id>
        <label>HAUS1</label>
    </interactant>
    <organismsDiffer>false</organismsDiffer>
    <experiments>4</experiments>
</comment>
<comment type="interaction">
    <interactant intactId="EBI-11525489">
        <id>Q86WT6-2</id>
    </interactant>
    <interactant intactId="EBI-16429135">
        <id>A0A0S2Z4Q4</id>
        <label>HGS</label>
    </interactant>
    <organismsDiffer>false</organismsDiffer>
    <experiments>3</experiments>
</comment>
<comment type="interaction">
    <interactant intactId="EBI-11525489">
        <id>Q86WT6-2</id>
    </interactant>
    <interactant intactId="EBI-740220">
        <id>O14964</id>
        <label>HGS</label>
    </interactant>
    <organismsDiffer>false</organismsDiffer>
    <experiments>6</experiments>
</comment>
<comment type="interaction">
    <interactant intactId="EBI-11525489">
        <id>Q86WT6-2</id>
    </interactant>
    <interactant intactId="EBI-712096">
        <id>P30519</id>
        <label>HMOX2</label>
    </interactant>
    <organismsDiffer>false</organismsDiffer>
    <experiments>3</experiments>
</comment>
<comment type="interaction">
    <interactant intactId="EBI-11525489">
        <id>Q86WT6-2</id>
    </interactant>
    <interactant intactId="EBI-350145">
        <id>P01112</id>
        <label>HRAS</label>
    </interactant>
    <organismsDiffer>false</organismsDiffer>
    <experiments>3</experiments>
</comment>
<comment type="interaction">
    <interactant intactId="EBI-11525489">
        <id>Q86WT6-2</id>
    </interactant>
    <interactant intactId="EBI-10253668">
        <id>Q6PHW0</id>
        <label>IYD</label>
    </interactant>
    <organismsDiffer>false</organismsDiffer>
    <experiments>3</experiments>
</comment>
<comment type="interaction">
    <interactant intactId="EBI-11525489">
        <id>Q86WT6-2</id>
    </interactant>
    <interactant intactId="EBI-10975473">
        <id>O60333-2</id>
        <label>KIF1B</label>
    </interactant>
    <organismsDiffer>false</organismsDiffer>
    <experiments>3</experiments>
</comment>
<comment type="interaction">
    <interactant intactId="EBI-11525489">
        <id>Q86WT6-2</id>
    </interactant>
    <interactant intactId="EBI-948266">
        <id>O14901</id>
        <label>KLF11</label>
    </interactant>
    <organismsDiffer>false</organismsDiffer>
    <experiments>3</experiments>
</comment>
<comment type="interaction">
    <interactant intactId="EBI-11525489">
        <id>Q86WT6-2</id>
    </interactant>
    <interactant intactId="EBI-6426443">
        <id>Q2WGJ6</id>
        <label>KLHL38</label>
    </interactant>
    <organismsDiffer>false</organismsDiffer>
    <experiments>3</experiments>
</comment>
<comment type="interaction">
    <interactant intactId="EBI-11525489">
        <id>Q86WT6-2</id>
    </interactant>
    <interactant intactId="EBI-21591415">
        <id>P13473-2</id>
        <label>LAMP2</label>
    </interactant>
    <organismsDiffer>false</organismsDiffer>
    <experiments>3</experiments>
</comment>
<comment type="interaction">
    <interactant intactId="EBI-11525489">
        <id>Q86WT6-2</id>
    </interactant>
    <interactant intactId="EBI-351935">
        <id>P02545</id>
        <label>LMNA</label>
    </interactant>
    <organismsDiffer>false</organismsDiffer>
    <experiments>3</experiments>
</comment>
<comment type="interaction">
    <interactant intactId="EBI-11525489">
        <id>Q86WT6-2</id>
    </interactant>
    <interactant intactId="EBI-10293291">
        <id>Q96S90</id>
        <label>LYSMD1</label>
    </interactant>
    <organismsDiffer>false</organismsDiffer>
    <experiments>3</experiments>
</comment>
<comment type="interaction">
    <interactant intactId="EBI-11525489">
        <id>Q86WT6-2</id>
    </interactant>
    <interactant intactId="EBI-743122">
        <id>P43358</id>
        <label>MAGEA4</label>
    </interactant>
    <organismsDiffer>false</organismsDiffer>
    <experiments>3</experiments>
</comment>
<comment type="interaction">
    <interactant intactId="EBI-11525489">
        <id>Q86WT6-2</id>
    </interactant>
    <interactant intactId="EBI-18015780">
        <id>Q3KP22-3</id>
        <label>MAJIN</label>
    </interactant>
    <organismsDiffer>false</organismsDiffer>
    <experiments>3</experiments>
</comment>
<comment type="interaction">
    <interactant intactId="EBI-11525489">
        <id>Q86WT6-2</id>
    </interactant>
    <interactant intactId="EBI-1189067">
        <id>P51608</id>
        <label>MECP2</label>
    </interactant>
    <organismsDiffer>false</organismsDiffer>
    <experiments>3</experiments>
</comment>
<comment type="interaction">
    <interactant intactId="EBI-11525489">
        <id>Q86WT6-2</id>
    </interactant>
    <interactant intactId="EBI-394644">
        <id>Q9H944</id>
        <label>MED20</label>
    </interactant>
    <organismsDiffer>false</organismsDiffer>
    <experiments>3</experiments>
</comment>
<comment type="interaction">
    <interactant intactId="EBI-11525489">
        <id>Q86WT6-2</id>
    </interactant>
    <interactant intactId="EBI-10172526">
        <id>Q9UJV3-2</id>
        <label>MID2</label>
    </interactant>
    <organismsDiffer>false</organismsDiffer>
    <experiments>3</experiments>
</comment>
<comment type="interaction">
    <interactant intactId="EBI-11525489">
        <id>Q86WT6-2</id>
    </interactant>
    <interactant intactId="EBI-713665">
        <id>P19404</id>
        <label>NDUFV2</label>
    </interactant>
    <organismsDiffer>false</organismsDiffer>
    <experiments>3</experiments>
</comment>
<comment type="interaction">
    <interactant intactId="EBI-11525489">
        <id>Q86WT6-2</id>
    </interactant>
    <interactant intactId="EBI-1752987">
        <id>Q86SG6</id>
        <label>NEK8</label>
    </interactant>
    <organismsDiffer>false</organismsDiffer>
    <experiments>3</experiments>
</comment>
<comment type="interaction">
    <interactant intactId="EBI-11525489">
        <id>Q86WT6-2</id>
    </interactant>
    <interactant intactId="EBI-1014472">
        <id>P35240</id>
        <label>NF2</label>
    </interactant>
    <organismsDiffer>false</organismsDiffer>
    <experiments>3</experiments>
</comment>
<comment type="interaction">
    <interactant intactId="EBI-11525489">
        <id>Q86WT6-2</id>
    </interactant>
    <interactant intactId="EBI-1391623">
        <id>P29474</id>
        <label>NOS3</label>
    </interactant>
    <organismsDiffer>false</organismsDiffer>
    <experiments>3</experiments>
</comment>
<comment type="interaction">
    <interactant intactId="EBI-11525489">
        <id>Q86WT6-2</id>
    </interactant>
    <interactant intactId="EBI-741158">
        <id>Q96HA8</id>
        <label>NTAQ1</label>
    </interactant>
    <organismsDiffer>false</organismsDiffer>
    <experiments>3</experiments>
</comment>
<comment type="interaction">
    <interactant intactId="EBI-11525489">
        <id>Q86WT6-2</id>
    </interactant>
    <interactant intactId="EBI-2811583">
        <id>Q9BVL2</id>
        <label>NUP58</label>
    </interactant>
    <organismsDiffer>false</organismsDiffer>
    <experiments>3</experiments>
</comment>
<comment type="interaction">
    <interactant intactId="EBI-11525489">
        <id>Q86WT6-2</id>
    </interactant>
    <interactant intactId="EBI-11023785">
        <id>Q9Y2Y1</id>
        <label>POLR3K</label>
    </interactant>
    <organismsDiffer>false</organismsDiffer>
    <experiments>3</experiments>
</comment>
<comment type="interaction">
    <interactant intactId="EBI-11525489">
        <id>Q86WT6-2</id>
    </interactant>
    <interactant intactId="EBI-286642">
        <id>P62826</id>
        <label>RAN</label>
    </interactant>
    <organismsDiffer>false</organismsDiffer>
    <experiments>3</experiments>
</comment>
<comment type="interaction">
    <interactant intactId="EBI-11525489">
        <id>Q86WT6-2</id>
    </interactant>
    <interactant intactId="EBI-10253121">
        <id>Q6P9E2</id>
        <label>RECK</label>
    </interactant>
    <organismsDiffer>false</organismsDiffer>
    <experiments>3</experiments>
</comment>
<comment type="interaction">
    <interactant intactId="EBI-11525489">
        <id>Q86WT6-2</id>
    </interactant>
    <interactant intactId="EBI-726876">
        <id>Q6NUQ1</id>
        <label>RINT1</label>
    </interactant>
    <organismsDiffer>false</organismsDiffer>
    <experiments>3</experiments>
</comment>
<comment type="interaction">
    <interactant intactId="EBI-11525489">
        <id>Q86WT6-2</id>
    </interactant>
    <interactant intactId="EBI-748350">
        <id>Q9UHP6</id>
        <label>RSPH14</label>
    </interactant>
    <organismsDiffer>false</organismsDiffer>
    <experiments>5</experiments>
</comment>
<comment type="interaction">
    <interactant intactId="EBI-11525489">
        <id>Q86WT6-2</id>
    </interactant>
    <interactant intactId="EBI-2623095">
        <id>Q9Y371</id>
        <label>SH3GLB1</label>
    </interactant>
    <organismsDiffer>false</organismsDiffer>
    <experiments>3</experiments>
</comment>
<comment type="interaction">
    <interactant intactId="EBI-11525489">
        <id>Q86WT6-2</id>
    </interactant>
    <interactant intactId="EBI-12020542">
        <id>Q96LM5</id>
        <label>SPMIP2</label>
    </interactant>
    <organismsDiffer>false</organismsDiffer>
    <experiments>3</experiments>
</comment>
<comment type="interaction">
    <interactant intactId="EBI-11525489">
        <id>Q86WT6-2</id>
    </interactant>
    <interactant intactId="EBI-5235340">
        <id>Q7Z699</id>
        <label>SPRED1</label>
    </interactant>
    <organismsDiffer>false</organismsDiffer>
    <experiments>3</experiments>
</comment>
<comment type="interaction">
    <interactant intactId="EBI-11525489">
        <id>Q86WT6-2</id>
    </interactant>
    <interactant intactId="EBI-725557">
        <id>Q9NZ72</id>
        <label>STMN3</label>
    </interactant>
    <organismsDiffer>false</organismsDiffer>
    <experiments>3</experiments>
</comment>
<comment type="interaction">
    <interactant intactId="EBI-11525489">
        <id>Q86WT6-2</id>
    </interactant>
    <interactant intactId="EBI-11958386">
        <id>Q6PIF2</id>
        <label>SYCE2</label>
    </interactant>
    <organismsDiffer>false</organismsDiffer>
    <experiments>3</experiments>
</comment>
<comment type="interaction">
    <interactant intactId="EBI-11525489">
        <id>Q86WT6-2</id>
    </interactant>
    <interactant intactId="EBI-372899">
        <id>Q13148</id>
        <label>TARDBP</label>
    </interactant>
    <organismsDiffer>false</organismsDiffer>
    <experiments>3</experiments>
</comment>
<comment type="interaction">
    <interactant intactId="EBI-11525489">
        <id>Q86WT6-2</id>
    </interactant>
    <interactant intactId="EBI-17559309">
        <id>P45379-11</id>
        <label>TNNT2</label>
    </interactant>
    <organismsDiffer>false</organismsDiffer>
    <experiments>3</experiments>
</comment>
<comment type="interaction">
    <interactant intactId="EBI-11525489">
        <id>Q86WT6-2</id>
    </interactant>
    <interactant intactId="EBI-11525489">
        <id>Q86WT6-2</id>
        <label>TRIM69</label>
    </interactant>
    <organismsDiffer>false</organismsDiffer>
    <experiments>4</experiments>
</comment>
<comment type="interaction">
    <interactant intactId="EBI-11525489">
        <id>Q86WT6-2</id>
    </interactant>
    <interactant intactId="EBI-12806590">
        <id>Q86WV8</id>
        <label>TSC1</label>
    </interactant>
    <organismsDiffer>false</organismsDiffer>
    <experiments>3</experiments>
</comment>
<comment type="interaction">
    <interactant intactId="EBI-11525489">
        <id>Q86WT6-2</id>
    </interactant>
    <interactant intactId="EBI-12040603">
        <id>Q9NZC7-5</id>
        <label>WWOX</label>
    </interactant>
    <organismsDiffer>false</organismsDiffer>
    <experiments>3</experiments>
</comment>
<comment type="interaction">
    <interactant intactId="EBI-11525489">
        <id>Q86WT6-2</id>
    </interactant>
    <interactant intactId="EBI-17234977">
        <id>A0A1U9X8X8</id>
    </interactant>
    <organismsDiffer>false</organismsDiffer>
    <experiments>3</experiments>
</comment>
<comment type="interaction">
    <interactant intactId="EBI-11525489">
        <id>Q86WT6-2</id>
    </interactant>
    <interactant intactId="EBI-25900580">
        <id>Q9Y649</id>
    </interactant>
    <organismsDiffer>false</organismsDiffer>
    <experiments>3</experiments>
</comment>
<comment type="subcellular location">
    <subcellularLocation>
        <location evidence="8 12 14">Cytoplasm</location>
    </subcellularLocation>
    <subcellularLocation>
        <location evidence="8">Nucleus</location>
    </subcellularLocation>
    <subcellularLocation>
        <location evidence="8">Nucleus speckle</location>
    </subcellularLocation>
    <subcellularLocation>
        <location evidence="15">Cytoplasm</location>
        <location evidence="15">Cytoskeleton</location>
        <location evidence="15">Microtubule organizing center</location>
        <location evidence="15">Centrosome</location>
    </subcellularLocation>
    <text evidence="14">Adopts a filamentous distribution in the cell cytoplasm where it strongly colocalizes with stable microtubules.</text>
</comment>
<comment type="alternative products">
    <event type="alternative splicing"/>
    <isoform>
        <id>Q86WT6-1</id>
        <name>1</name>
        <sequence type="displayed"/>
    </isoform>
    <isoform>
        <id>Q86WT6-2</id>
        <name>2</name>
        <sequence type="described" ref="VSP_023201"/>
    </isoform>
    <isoform>
        <id>Q86WT6-3</id>
        <name>3</name>
        <name>Trimless alpha</name>
        <sequence type="described" ref="VSP_023200"/>
    </isoform>
    <isoform>
        <id>Q86WT6-4</id>
        <name>4</name>
        <name>Trimless beta</name>
        <sequence type="described" ref="VSP_023200 VSP_023202"/>
    </isoform>
</comment>
<comment type="induction">
    <text evidence="9">By interferon-beta.</text>
</comment>
<comment type="induction">
    <text evidence="9 11">(Microbial infection) Upon dengue virus infection.</text>
</comment>
<comment type="domain">
    <text>The RING-type zinc finger domain is responsible for E3 ubiquitin ligase activity and for nuclear localization and aggregation.</text>
</comment>
<comment type="PTM">
    <text evidence="3">Phosphorylated. Phosphorylation is necessary for nuclear localization.</text>
</comment>
<comment type="similarity">
    <text evidence="18">Belongs to the TRIM/RBCC family.</text>
</comment>
<reference key="1">
    <citation type="submission" date="2000-09" db="EMBL/GenBank/DDBJ databases">
        <title>TRIMLESS defines a new class of RFP-like domain containing proteins.</title>
        <authorList>
            <person name="Merla G."/>
            <person name="Zanaria E."/>
            <person name="Cairo S."/>
            <person name="Meroni G."/>
            <person name="Reymond A."/>
        </authorList>
    </citation>
    <scope>NUCLEOTIDE SEQUENCE [MRNA] (ISOFORMS 3 AND 4)</scope>
</reference>
<reference key="2">
    <citation type="submission" date="2005-10" db="EMBL/GenBank/DDBJ databases">
        <authorList>
            <person name="Corcoran M."/>
            <person name="Lerner M."/>
            <person name="Sangfelt O."/>
            <person name="Grander D."/>
        </authorList>
    </citation>
    <scope>NUCLEOTIDE SEQUENCE [MRNA] (ISOFORM 1)</scope>
</reference>
<reference key="3">
    <citation type="submission" date="2003-05" db="EMBL/GenBank/DDBJ databases">
        <title>A new spermatogenesis related gene.</title>
        <authorList>
            <person name="Fan M.M."/>
            <person name="Miao S.Y."/>
            <person name="Zhang X.D."/>
            <person name="Qiao Y."/>
            <person name="Liang G."/>
            <person name="Wang L.F."/>
        </authorList>
    </citation>
    <scope>NUCLEOTIDE SEQUENCE [LARGE SCALE MRNA] (ISOFORM 1)</scope>
    <source>
        <tissue>Testis</tissue>
    </source>
</reference>
<reference key="4">
    <citation type="journal article" date="2006" name="Nature">
        <title>Analysis of the DNA sequence and duplication history of human chromosome 15.</title>
        <authorList>
            <person name="Zody M.C."/>
            <person name="Garber M."/>
            <person name="Sharpe T."/>
            <person name="Young S.K."/>
            <person name="Rowen L."/>
            <person name="O'Neill K."/>
            <person name="Whittaker C.A."/>
            <person name="Kamal M."/>
            <person name="Chang J.L."/>
            <person name="Cuomo C.A."/>
            <person name="Dewar K."/>
            <person name="FitzGerald M.G."/>
            <person name="Kodira C.D."/>
            <person name="Madan A."/>
            <person name="Qin S."/>
            <person name="Yang X."/>
            <person name="Abbasi N."/>
            <person name="Abouelleil A."/>
            <person name="Arachchi H.M."/>
            <person name="Baradarani L."/>
            <person name="Birditt B."/>
            <person name="Bloom S."/>
            <person name="Bloom T."/>
            <person name="Borowsky M.L."/>
            <person name="Burke J."/>
            <person name="Butler J."/>
            <person name="Cook A."/>
            <person name="DeArellano K."/>
            <person name="DeCaprio D."/>
            <person name="Dorris L. III"/>
            <person name="Dors M."/>
            <person name="Eichler E.E."/>
            <person name="Engels R."/>
            <person name="Fahey J."/>
            <person name="Fleetwood P."/>
            <person name="Friedman C."/>
            <person name="Gearin G."/>
            <person name="Hall J.L."/>
            <person name="Hensley G."/>
            <person name="Johnson E."/>
            <person name="Jones C."/>
            <person name="Kamat A."/>
            <person name="Kaur A."/>
            <person name="Locke D.P."/>
            <person name="Madan A."/>
            <person name="Munson G."/>
            <person name="Jaffe D.B."/>
            <person name="Lui A."/>
            <person name="Macdonald P."/>
            <person name="Mauceli E."/>
            <person name="Naylor J.W."/>
            <person name="Nesbitt R."/>
            <person name="Nicol R."/>
            <person name="O'Leary S.B."/>
            <person name="Ratcliffe A."/>
            <person name="Rounsley S."/>
            <person name="She X."/>
            <person name="Sneddon K.M.B."/>
            <person name="Stewart S."/>
            <person name="Sougnez C."/>
            <person name="Stone S.M."/>
            <person name="Topham K."/>
            <person name="Vincent D."/>
            <person name="Wang S."/>
            <person name="Zimmer A.R."/>
            <person name="Birren B.W."/>
            <person name="Hood L."/>
            <person name="Lander E.S."/>
            <person name="Nusbaum C."/>
        </authorList>
    </citation>
    <scope>NUCLEOTIDE SEQUENCE [LARGE SCALE GENOMIC DNA]</scope>
</reference>
<reference key="5">
    <citation type="journal article" date="2004" name="Genome Res.">
        <title>The status, quality, and expansion of the NIH full-length cDNA project: the Mammalian Gene Collection (MGC).</title>
        <authorList>
            <consortium name="The MGC Project Team"/>
        </authorList>
    </citation>
    <scope>NUCLEOTIDE SEQUENCE [LARGE SCALE MRNA] (ISOFORMS 1 AND 2)</scope>
    <scope>VARIANTS ASN-15 AND MET-161</scope>
    <source>
        <tissue>Brain</tissue>
        <tissue>Testis</tissue>
    </source>
</reference>
<reference key="6">
    <citation type="journal article" date="2012" name="Biochem. Biophys. Res. Commun.">
        <title>Characterisation of human RING finger protein TRIM69, a novel testis E3 ubiquitin ligase and its subcellular localisation.</title>
        <authorList>
            <person name="Han Y."/>
            <person name="Li R."/>
            <person name="Gao J."/>
            <person name="Miao S."/>
            <person name="Wang L."/>
        </authorList>
    </citation>
    <scope>SUBCELLULAR LOCATION</scope>
    <scope>FUNCTION</scope>
    <scope>MUTAGENESIS OF CYS-61 AND CYS-64</scope>
</reference>
<reference key="7">
    <citation type="journal article" date="2018" name="PLoS Pathog.">
        <title>Interferon-stimulated TRIM69 interrupts dengue virus replication by ubiquitinating viral nonstructural protein 3.</title>
        <authorList>
            <person name="Wang K."/>
            <person name="Zou C."/>
            <person name="Wang X."/>
            <person name="Huang C."/>
            <person name="Feng T."/>
            <person name="Pan W."/>
            <person name="Wu Q."/>
            <person name="Wang P."/>
            <person name="Dai J."/>
        </authorList>
    </citation>
    <scope>FUNCTION</scope>
    <scope>INDUCTION BY DENGUE VIRUS (MICROBIAL INFECTION)</scope>
    <scope>INDUCTION BY INTERFERON BETA</scope>
    <scope>CATALYTIC ACTIVITY</scope>
    <scope>MUTAGENESIS OF CYS-61 AND CYS-64</scope>
</reference>
<reference key="8">
    <citation type="journal article" date="2019" name="Redox Biol.">
        <title>TRIM69 inhibits cataractogenesis by negatively regulating p53.</title>
        <authorList>
            <person name="Rong X."/>
            <person name="Rao J."/>
            <person name="Li D."/>
            <person name="Jing Q."/>
            <person name="Lu Y."/>
            <person name="Ji Y."/>
        </authorList>
    </citation>
    <scope>FUNCTION</scope>
</reference>
<reference key="9">
    <citation type="journal article" date="2019" name="J. Virol.">
        <title>TRIM69 Inhibits Vesicular Stomatitis Indiana Virus.</title>
        <authorList>
            <person name="Rihn S.J."/>
            <person name="Aziz M.A."/>
            <person name="Stewart D.G."/>
            <person name="Hughes J."/>
            <person name="Turnbull M.L."/>
            <person name="Varela M."/>
            <person name="Sugrue E."/>
            <person name="Herd C.S."/>
            <person name="Stanifer M."/>
            <person name="Sinkins S.P."/>
            <person name="Palmarini M."/>
            <person name="Wilson S.J."/>
        </authorList>
    </citation>
    <scope>FUNCTION</scope>
    <scope>INDUCTION BY INTERFERON BETA</scope>
</reference>
<reference key="10">
    <citation type="journal article" date="2019" name="J. Virol.">
        <title>Vesicular Stomatitis Virus Transcription Is Inhibited by TRIM69 in the Interferon-Induced Antiviral State.</title>
        <authorList>
            <person name="Kueck T."/>
            <person name="Bloyet L.M."/>
            <person name="Cassella E."/>
            <person name="Zang T."/>
            <person name="Schmidt F."/>
            <person name="Brusic V."/>
            <person name="Tekes G."/>
            <person name="Pornillos O."/>
            <person name="Whelan S.P.J."/>
            <person name="Bieniasz P.D."/>
        </authorList>
    </citation>
    <scope>FUNCTION</scope>
    <scope>SUBUNIT</scope>
    <scope>SUBCELLULAR LOCATION</scope>
    <scope>MUTAGENESIS OF VAL-95; LEU-96 AND LEU-99</scope>
</reference>
<reference key="11">
    <citation type="journal article" date="2022" name="Proc. Natl. Acad. Sci. U.S.A.">
        <title>Trim69 is a microtubule regulator that acts as a pantropic viral inhibitor.</title>
        <authorList>
            <person name="Song Y."/>
            <person name="Nguyen X.N."/>
            <person name="Kumar A."/>
            <person name="da Silva C."/>
            <person name="Picard L."/>
            <person name="Etienne L."/>
            <person name="Cimarelli A."/>
        </authorList>
    </citation>
    <scope>FUNCTION</scope>
    <scope>SUBCELLULAR LOCATION</scope>
    <scope>MUTAGENESIS OF CYS-61 AND CYS-64</scope>
</reference>
<reference key="12">
    <citation type="journal article" date="2023" name="Nucleic Acids Res.">
        <title>The TRIM69-MST2 signaling axis regulates centrosome dynamics and chromosome segregation.</title>
        <authorList>
            <person name="Wang Y."/>
            <person name="Risteski P."/>
            <person name="Yang Y."/>
            <person name="Chen H."/>
            <person name="Droby G."/>
            <person name="Walens A."/>
            <person name="Jayaprakash D."/>
            <person name="Troester M."/>
            <person name="Herring L."/>
            <person name="Chernoff J."/>
            <person name="Tolic I.M."/>
            <person name="Bowser J."/>
            <person name="Vaziri C."/>
        </authorList>
    </citation>
    <scope>FUNCTION</scope>
    <scope>SUBCELLULAR LOCATION</scope>
    <scope>CATALYTIC ACTIVITY</scope>
</reference>
<reference evidence="19" key="13">
    <citation type="journal article" date="2020" name="Acta Crystallogr. D">
        <title>The RING domain of TRIM69 promotes higher-order assembly.</title>
        <authorList>
            <person name="Keown J.R."/>
            <person name="Yang J."/>
            <person name="Black M.M."/>
            <person name="Goldstone D.C."/>
        </authorList>
    </citation>
    <scope>X-RAY CRYSTALLOGRAPHY (2.10 ANGSTROMS) OF 1-110</scope>
    <scope>SUBUNIT</scope>
</reference>